<sequence length="513" mass="55677">MQLNAHEISDLIKKQIEGFDFDAEVRTEGSVVSVSDGIVRIHGLADVQFGEMLEFPNNTFGMALNLEQNSVGAVILGDYLHISEGDVVKCTNRLVEVPVGEAMLGRVVNPLGKAIDGKDDIDVQGARPLEIMAPGVINRKSVDQPIQTGIKAIDAMVPVGRGQRELIIGDRQTGKTAVAIDTIINQKDSGIRCVYVAIGQKDSSVAAVVRKLEEYGALENTIIVTAGAASAPALQYIAPYAGCTMAEYFRDRGEDALIVYDDLTKQAWAYREVSLLLKRPPGREAYPGDVFYLHSRLLERASRVNAEYVEKMTNGEVKGKTGSLTALPIIETQGGDVSAFVPTNVISITDGQIFLETDLFNAGIRPAINAGLSVSRVGGSAQTNIIKKLGGGIRLDLAQYRELAAFAQFSSDLDSETKAQIDRGQRVTELMKQNQYSPLSIAEMATSLFAVNSGLLDDIEVNKVVDFEAALIAYMNANQILLMSKINDTGDYNDKISNELQAAIDDFKQNHTW</sequence>
<name>ATPA_RUTMC</name>
<proteinExistence type="inferred from homology"/>
<gene>
    <name evidence="1" type="primary">atpA</name>
    <name type="ordered locus">Rmag_1047</name>
</gene>
<feature type="chain" id="PRO_0000302695" description="ATP synthase subunit alpha">
    <location>
        <begin position="1"/>
        <end position="513"/>
    </location>
</feature>
<feature type="binding site" evidence="1">
    <location>
        <begin position="169"/>
        <end position="176"/>
    </location>
    <ligand>
        <name>ATP</name>
        <dbReference type="ChEBI" id="CHEBI:30616"/>
    </ligand>
</feature>
<feature type="site" description="Required for activity" evidence="1">
    <location>
        <position position="373"/>
    </location>
</feature>
<organism>
    <name type="scientific">Ruthia magnifica subsp. Calyptogena magnifica</name>
    <dbReference type="NCBI Taxonomy" id="413404"/>
    <lineage>
        <taxon>Bacteria</taxon>
        <taxon>Pseudomonadati</taxon>
        <taxon>Pseudomonadota</taxon>
        <taxon>Gammaproteobacteria</taxon>
        <taxon>Candidatus Pseudothioglobaceae</taxon>
        <taxon>Candidatus Ruthturnera</taxon>
    </lineage>
</organism>
<reference key="1">
    <citation type="journal article" date="2007" name="Science">
        <title>The Calyptogena magnifica chemoautotrophic symbiont genome.</title>
        <authorList>
            <person name="Newton I.L.G."/>
            <person name="Woyke T."/>
            <person name="Auchtung T.A."/>
            <person name="Dilly G.F."/>
            <person name="Dutton R.J."/>
            <person name="Fisher M.C."/>
            <person name="Fontanez K.M."/>
            <person name="Lau E."/>
            <person name="Stewart F.J."/>
            <person name="Richardson P.M."/>
            <person name="Barry K.W."/>
            <person name="Saunders E."/>
            <person name="Detter J.C."/>
            <person name="Wu D."/>
            <person name="Eisen J.A."/>
            <person name="Cavanaugh C.M."/>
        </authorList>
    </citation>
    <scope>NUCLEOTIDE SEQUENCE [LARGE SCALE GENOMIC DNA]</scope>
</reference>
<keyword id="KW-0066">ATP synthesis</keyword>
<keyword id="KW-0067">ATP-binding</keyword>
<keyword id="KW-0997">Cell inner membrane</keyword>
<keyword id="KW-1003">Cell membrane</keyword>
<keyword id="KW-0139">CF(1)</keyword>
<keyword id="KW-0375">Hydrogen ion transport</keyword>
<keyword id="KW-0406">Ion transport</keyword>
<keyword id="KW-0472">Membrane</keyword>
<keyword id="KW-0547">Nucleotide-binding</keyword>
<keyword id="KW-1278">Translocase</keyword>
<keyword id="KW-0813">Transport</keyword>
<accession>A1AXU4</accession>
<protein>
    <recommendedName>
        <fullName evidence="1">ATP synthase subunit alpha</fullName>
        <ecNumber evidence="1">7.1.2.2</ecNumber>
    </recommendedName>
    <alternativeName>
        <fullName evidence="1">ATP synthase F1 sector subunit alpha</fullName>
    </alternativeName>
    <alternativeName>
        <fullName evidence="1">F-ATPase subunit alpha</fullName>
    </alternativeName>
</protein>
<comment type="function">
    <text evidence="1">Produces ATP from ADP in the presence of a proton gradient across the membrane. The alpha chain is a regulatory subunit.</text>
</comment>
<comment type="catalytic activity">
    <reaction evidence="1">
        <text>ATP + H2O + 4 H(+)(in) = ADP + phosphate + 5 H(+)(out)</text>
        <dbReference type="Rhea" id="RHEA:57720"/>
        <dbReference type="ChEBI" id="CHEBI:15377"/>
        <dbReference type="ChEBI" id="CHEBI:15378"/>
        <dbReference type="ChEBI" id="CHEBI:30616"/>
        <dbReference type="ChEBI" id="CHEBI:43474"/>
        <dbReference type="ChEBI" id="CHEBI:456216"/>
        <dbReference type="EC" id="7.1.2.2"/>
    </reaction>
</comment>
<comment type="subunit">
    <text evidence="1">F-type ATPases have 2 components, CF(1) - the catalytic core - and CF(0) - the membrane proton channel. CF(1) has five subunits: alpha(3), beta(3), gamma(1), delta(1), epsilon(1). CF(0) has three main subunits: a(1), b(2) and c(9-12). The alpha and beta chains form an alternating ring which encloses part of the gamma chain. CF(1) is attached to CF(0) by a central stalk formed by the gamma and epsilon chains, while a peripheral stalk is formed by the delta and b chains.</text>
</comment>
<comment type="subcellular location">
    <subcellularLocation>
        <location evidence="1">Cell inner membrane</location>
        <topology evidence="1">Peripheral membrane protein</topology>
    </subcellularLocation>
</comment>
<comment type="similarity">
    <text evidence="1">Belongs to the ATPase alpha/beta chains family.</text>
</comment>
<evidence type="ECO:0000255" key="1">
    <source>
        <dbReference type="HAMAP-Rule" id="MF_01346"/>
    </source>
</evidence>
<dbReference type="EC" id="7.1.2.2" evidence="1"/>
<dbReference type="EMBL" id="CP000488">
    <property type="protein sequence ID" value="ABL02751.1"/>
    <property type="molecule type" value="Genomic_DNA"/>
</dbReference>
<dbReference type="RefSeq" id="WP_011738376.1">
    <property type="nucleotide sequence ID" value="NC_008610.1"/>
</dbReference>
<dbReference type="SMR" id="A1AXU4"/>
<dbReference type="STRING" id="413404.Rmag_1047"/>
<dbReference type="KEGG" id="rma:Rmag_1047"/>
<dbReference type="eggNOG" id="COG0056">
    <property type="taxonomic scope" value="Bacteria"/>
</dbReference>
<dbReference type="HOGENOM" id="CLU_010091_2_1_6"/>
<dbReference type="OrthoDB" id="9803053at2"/>
<dbReference type="Proteomes" id="UP000002587">
    <property type="component" value="Chromosome"/>
</dbReference>
<dbReference type="GO" id="GO:0005886">
    <property type="term" value="C:plasma membrane"/>
    <property type="evidence" value="ECO:0007669"/>
    <property type="project" value="UniProtKB-SubCell"/>
</dbReference>
<dbReference type="GO" id="GO:0045259">
    <property type="term" value="C:proton-transporting ATP synthase complex"/>
    <property type="evidence" value="ECO:0007669"/>
    <property type="project" value="UniProtKB-KW"/>
</dbReference>
<dbReference type="GO" id="GO:0043531">
    <property type="term" value="F:ADP binding"/>
    <property type="evidence" value="ECO:0007669"/>
    <property type="project" value="TreeGrafter"/>
</dbReference>
<dbReference type="GO" id="GO:0005524">
    <property type="term" value="F:ATP binding"/>
    <property type="evidence" value="ECO:0007669"/>
    <property type="project" value="UniProtKB-UniRule"/>
</dbReference>
<dbReference type="GO" id="GO:0046933">
    <property type="term" value="F:proton-transporting ATP synthase activity, rotational mechanism"/>
    <property type="evidence" value="ECO:0007669"/>
    <property type="project" value="UniProtKB-UniRule"/>
</dbReference>
<dbReference type="CDD" id="cd18113">
    <property type="entry name" value="ATP-synt_F1_alpha_C"/>
    <property type="match status" value="1"/>
</dbReference>
<dbReference type="CDD" id="cd18116">
    <property type="entry name" value="ATP-synt_F1_alpha_N"/>
    <property type="match status" value="1"/>
</dbReference>
<dbReference type="CDD" id="cd01132">
    <property type="entry name" value="F1-ATPase_alpha_CD"/>
    <property type="match status" value="1"/>
</dbReference>
<dbReference type="FunFam" id="1.20.150.20:FF:000001">
    <property type="entry name" value="ATP synthase subunit alpha"/>
    <property type="match status" value="1"/>
</dbReference>
<dbReference type="FunFam" id="2.40.30.20:FF:000001">
    <property type="entry name" value="ATP synthase subunit alpha"/>
    <property type="match status" value="1"/>
</dbReference>
<dbReference type="FunFam" id="3.40.50.300:FF:000002">
    <property type="entry name" value="ATP synthase subunit alpha"/>
    <property type="match status" value="1"/>
</dbReference>
<dbReference type="Gene3D" id="2.40.30.20">
    <property type="match status" value="1"/>
</dbReference>
<dbReference type="Gene3D" id="1.20.150.20">
    <property type="entry name" value="ATP synthase alpha/beta chain, C-terminal domain"/>
    <property type="match status" value="1"/>
</dbReference>
<dbReference type="Gene3D" id="3.40.50.300">
    <property type="entry name" value="P-loop containing nucleotide triphosphate hydrolases"/>
    <property type="match status" value="1"/>
</dbReference>
<dbReference type="HAMAP" id="MF_01346">
    <property type="entry name" value="ATP_synth_alpha_bact"/>
    <property type="match status" value="1"/>
</dbReference>
<dbReference type="InterPro" id="IPR023366">
    <property type="entry name" value="ATP_synth_asu-like_sf"/>
</dbReference>
<dbReference type="InterPro" id="IPR000793">
    <property type="entry name" value="ATP_synth_asu_C"/>
</dbReference>
<dbReference type="InterPro" id="IPR038376">
    <property type="entry name" value="ATP_synth_asu_C_sf"/>
</dbReference>
<dbReference type="InterPro" id="IPR033732">
    <property type="entry name" value="ATP_synth_F1_a_nt-bd_dom"/>
</dbReference>
<dbReference type="InterPro" id="IPR005294">
    <property type="entry name" value="ATP_synth_F1_asu"/>
</dbReference>
<dbReference type="InterPro" id="IPR020003">
    <property type="entry name" value="ATPase_a/bsu_AS"/>
</dbReference>
<dbReference type="InterPro" id="IPR004100">
    <property type="entry name" value="ATPase_F1/V1/A1_a/bsu_N"/>
</dbReference>
<dbReference type="InterPro" id="IPR036121">
    <property type="entry name" value="ATPase_F1/V1/A1_a/bsu_N_sf"/>
</dbReference>
<dbReference type="InterPro" id="IPR000194">
    <property type="entry name" value="ATPase_F1/V1/A1_a/bsu_nucl-bd"/>
</dbReference>
<dbReference type="InterPro" id="IPR027417">
    <property type="entry name" value="P-loop_NTPase"/>
</dbReference>
<dbReference type="NCBIfam" id="TIGR00962">
    <property type="entry name" value="atpA"/>
    <property type="match status" value="1"/>
</dbReference>
<dbReference type="NCBIfam" id="NF009884">
    <property type="entry name" value="PRK13343.1"/>
    <property type="match status" value="1"/>
</dbReference>
<dbReference type="PANTHER" id="PTHR48082">
    <property type="entry name" value="ATP SYNTHASE SUBUNIT ALPHA, MITOCHONDRIAL"/>
    <property type="match status" value="1"/>
</dbReference>
<dbReference type="PANTHER" id="PTHR48082:SF2">
    <property type="entry name" value="ATP SYNTHASE SUBUNIT ALPHA, MITOCHONDRIAL"/>
    <property type="match status" value="1"/>
</dbReference>
<dbReference type="Pfam" id="PF00006">
    <property type="entry name" value="ATP-synt_ab"/>
    <property type="match status" value="1"/>
</dbReference>
<dbReference type="Pfam" id="PF00306">
    <property type="entry name" value="ATP-synt_ab_C"/>
    <property type="match status" value="1"/>
</dbReference>
<dbReference type="Pfam" id="PF02874">
    <property type="entry name" value="ATP-synt_ab_N"/>
    <property type="match status" value="1"/>
</dbReference>
<dbReference type="SUPFAM" id="SSF47917">
    <property type="entry name" value="C-terminal domain of alpha and beta subunits of F1 ATP synthase"/>
    <property type="match status" value="1"/>
</dbReference>
<dbReference type="SUPFAM" id="SSF50615">
    <property type="entry name" value="N-terminal domain of alpha and beta subunits of F1 ATP synthase"/>
    <property type="match status" value="1"/>
</dbReference>
<dbReference type="SUPFAM" id="SSF52540">
    <property type="entry name" value="P-loop containing nucleoside triphosphate hydrolases"/>
    <property type="match status" value="1"/>
</dbReference>
<dbReference type="PROSITE" id="PS00152">
    <property type="entry name" value="ATPASE_ALPHA_BETA"/>
    <property type="match status" value="1"/>
</dbReference>